<comment type="function">
    <text>Cytoplasmic dynein acts as a motor for the intracellular retrograde motility of vesicles and organelles along microtubules. Dynein has ATPase activity; the force-producing power stroke is thought to occur on release of ADP.</text>
</comment>
<comment type="subunit">
    <text>Consists of at least two heavy chains and a number of intermediate and light chains.</text>
</comment>
<comment type="subcellular location">
    <subcellularLocation>
        <location>Cytoplasm</location>
        <location>Cytoskeleton</location>
    </subcellularLocation>
</comment>
<comment type="domain">
    <text>Dynein heavy chains probably consist of an N-terminal stem (which binds cargo and interacts with other dynein components), and the head or motor domain. The motor contains six tandemly-linked AAA domains in the head, which form a ring. A stalk-like structure (formed by two of the coiled coil domains) protrudes between AAA 4 and AAA 5 and terminates in a microtubule-binding site. A seventh domain may also contribute to this ring; it is not clear whether the N-terminus or the C-terminus forms this extra domain. There are four well-conserved and two non-conserved ATPase sites, one per AAA domain. Probably only one of these (within AAA 1) actually hydrolyzes ATP, the others may serve a regulatory function.</text>
</comment>
<comment type="similarity">
    <text evidence="3">Belongs to the dynein heavy chain family.</text>
</comment>
<comment type="sequence caution" evidence="3">
    <conflict type="frameshift">
        <sequence resource="EMBL-CDS" id="CAA78827"/>
    </conflict>
</comment>
<evidence type="ECO:0000255" key="1"/>
<evidence type="ECO:0000256" key="2">
    <source>
        <dbReference type="SAM" id="MobiDB-lite"/>
    </source>
</evidence>
<evidence type="ECO:0000305" key="3"/>
<evidence type="ECO:0007829" key="4">
    <source>
        <dbReference type="PDB" id="3VKG"/>
    </source>
</evidence>
<name>DYHC_DICDI</name>
<organism>
    <name type="scientific">Dictyostelium discoideum</name>
    <name type="common">Social amoeba</name>
    <dbReference type="NCBI Taxonomy" id="44689"/>
    <lineage>
        <taxon>Eukaryota</taxon>
        <taxon>Amoebozoa</taxon>
        <taxon>Evosea</taxon>
        <taxon>Eumycetozoa</taxon>
        <taxon>Dictyostelia</taxon>
        <taxon>Dictyosteliales</taxon>
        <taxon>Dictyosteliaceae</taxon>
        <taxon>Dictyostelium</taxon>
    </lineage>
</organism>
<accession>P34036</accession>
<accession>Q551T4</accession>
<accession>Q8T128</accession>
<protein>
    <recommendedName>
        <fullName>Dynein heavy chain, cytoplasmic</fullName>
    </recommendedName>
    <alternativeName>
        <fullName>Dynein heavy chain, cytosolic</fullName>
        <shortName>DYHC</shortName>
    </alternativeName>
</protein>
<feature type="chain" id="PRO_0000114635" description="Dynein heavy chain, cytoplasmic">
    <location>
        <begin position="1"/>
        <end position="4730"/>
    </location>
</feature>
<feature type="region of interest" description="Stem">
    <location>
        <begin position="1"/>
        <end position="1935"/>
    </location>
</feature>
<feature type="region of interest" description="Disordered" evidence="2">
    <location>
        <begin position="1"/>
        <end position="23"/>
    </location>
</feature>
<feature type="region of interest" description="Disordered" evidence="2">
    <location>
        <begin position="91"/>
        <end position="120"/>
    </location>
</feature>
<feature type="region of interest" description="Disordered" evidence="2">
    <location>
        <begin position="964"/>
        <end position="1016"/>
    </location>
</feature>
<feature type="region of interest" description="AAA 1">
    <location>
        <begin position="1936"/>
        <end position="2158"/>
    </location>
</feature>
<feature type="region of interest" description="AAA 2">
    <location>
        <begin position="2238"/>
        <end position="2531"/>
    </location>
</feature>
<feature type="region of interest" description="Disordered" evidence="2">
    <location>
        <begin position="2437"/>
        <end position="2486"/>
    </location>
</feature>
<feature type="region of interest" description="AAA 3">
    <location>
        <begin position="2635"/>
        <end position="2885"/>
    </location>
</feature>
<feature type="region of interest" description="AAA 4">
    <location>
        <begin position="2978"/>
        <end position="3252"/>
    </location>
</feature>
<feature type="region of interest" description="Stalk">
    <location>
        <begin position="3271"/>
        <end position="3585"/>
    </location>
</feature>
<feature type="region of interest" description="AAA 5">
    <location>
        <begin position="3638"/>
        <end position="3867"/>
    </location>
</feature>
<feature type="region of interest" description="AAA 6">
    <location>
        <begin position="4098"/>
        <end position="4312"/>
    </location>
</feature>
<feature type="region of interest" description="Disordered" evidence="2">
    <location>
        <begin position="4432"/>
        <end position="4465"/>
    </location>
</feature>
<feature type="coiled-coil region" evidence="1">
    <location>
        <begin position="867"/>
        <end position="900"/>
    </location>
</feature>
<feature type="coiled-coil region" evidence="1">
    <location>
        <begin position="1204"/>
        <end position="1224"/>
    </location>
</feature>
<feature type="coiled-coil region" evidence="1">
    <location>
        <begin position="1343"/>
        <end position="1372"/>
    </location>
</feature>
<feature type="coiled-coil region" evidence="1">
    <location>
        <begin position="1425"/>
        <end position="1441"/>
    </location>
</feature>
<feature type="coiled-coil region" evidence="1">
    <location>
        <begin position="1661"/>
        <end position="1689"/>
    </location>
</feature>
<feature type="coiled-coil region" evidence="1">
    <location>
        <begin position="2231"/>
        <end position="2253"/>
    </location>
</feature>
<feature type="coiled-coil region" evidence="1">
    <location>
        <begin position="2442"/>
        <end position="2462"/>
    </location>
</feature>
<feature type="coiled-coil region" evidence="1">
    <location>
        <begin position="3271"/>
        <end position="3349"/>
    </location>
</feature>
<feature type="coiled-coil region" evidence="1">
    <location>
        <begin position="3483"/>
        <end position="3585"/>
    </location>
</feature>
<feature type="coiled-coil region" evidence="1">
    <location>
        <begin position="3854"/>
        <end position="3881"/>
    </location>
</feature>
<feature type="compositionally biased region" description="Low complexity" evidence="2">
    <location>
        <begin position="10"/>
        <end position="23"/>
    </location>
</feature>
<feature type="compositionally biased region" description="Polar residues" evidence="2">
    <location>
        <begin position="969"/>
        <end position="978"/>
    </location>
</feature>
<feature type="compositionally biased region" description="Low complexity" evidence="2">
    <location>
        <begin position="1002"/>
        <end position="1016"/>
    </location>
</feature>
<feature type="compositionally biased region" description="Basic and acidic residues" evidence="2">
    <location>
        <begin position="2441"/>
        <end position="2451"/>
    </location>
</feature>
<feature type="compositionally biased region" description="Low complexity" evidence="2">
    <location>
        <begin position="2454"/>
        <end position="2486"/>
    </location>
</feature>
<feature type="compositionally biased region" description="Basic and acidic residues" evidence="2">
    <location>
        <begin position="4449"/>
        <end position="4463"/>
    </location>
</feature>
<feature type="binding site" evidence="1">
    <location>
        <begin position="1974"/>
        <end position="1981"/>
    </location>
    <ligand>
        <name>ATP</name>
        <dbReference type="ChEBI" id="CHEBI:30616"/>
    </ligand>
</feature>
<feature type="binding site" evidence="1">
    <location>
        <begin position="2276"/>
        <end position="2283"/>
    </location>
    <ligand>
        <name>ATP</name>
        <dbReference type="ChEBI" id="CHEBI:30616"/>
    </ligand>
</feature>
<feature type="binding site" evidence="1">
    <location>
        <begin position="2674"/>
        <end position="2681"/>
    </location>
    <ligand>
        <name>ATP</name>
        <dbReference type="ChEBI" id="CHEBI:30616"/>
    </ligand>
</feature>
<feature type="binding site" evidence="1">
    <location>
        <begin position="3016"/>
        <end position="3023"/>
    </location>
    <ligand>
        <name>ATP</name>
        <dbReference type="ChEBI" id="CHEBI:30616"/>
    </ligand>
</feature>
<feature type="sequence conflict" description="In Ref. 1; CAA78827." evidence="3" ref="1">
    <original>V</original>
    <variation>L</variation>
    <location>
        <position position="1604"/>
    </location>
</feature>
<feature type="sequence conflict" description="In Ref. 1; CAA78827." evidence="3" ref="1">
    <original>E</original>
    <variation>Q</variation>
    <location>
        <position position="1616"/>
    </location>
</feature>
<feature type="helix" evidence="4">
    <location>
        <begin position="1411"/>
        <end position="1416"/>
    </location>
</feature>
<feature type="turn" evidence="4">
    <location>
        <begin position="1419"/>
        <end position="1421"/>
    </location>
</feature>
<feature type="helix" evidence="4">
    <location>
        <begin position="1451"/>
        <end position="1464"/>
    </location>
</feature>
<feature type="helix" evidence="4">
    <location>
        <begin position="1466"/>
        <end position="1470"/>
    </location>
</feature>
<feature type="helix" evidence="4">
    <location>
        <begin position="1478"/>
        <end position="1487"/>
    </location>
</feature>
<feature type="helix" evidence="4">
    <location>
        <begin position="1499"/>
        <end position="1504"/>
    </location>
</feature>
<feature type="helix" evidence="4">
    <location>
        <begin position="1507"/>
        <end position="1540"/>
    </location>
</feature>
<feature type="strand" evidence="4">
    <location>
        <begin position="1544"/>
        <end position="1548"/>
    </location>
</feature>
<feature type="turn" evidence="4">
    <location>
        <begin position="1549"/>
        <end position="1551"/>
    </location>
</feature>
<feature type="strand" evidence="4">
    <location>
        <begin position="1552"/>
        <end position="1556"/>
    </location>
</feature>
<feature type="helix" evidence="4">
    <location>
        <begin position="1558"/>
        <end position="1574"/>
    </location>
</feature>
<feature type="turn" evidence="4">
    <location>
        <begin position="1579"/>
        <end position="1582"/>
    </location>
</feature>
<feature type="helix" evidence="4">
    <location>
        <begin position="1583"/>
        <end position="1586"/>
    </location>
</feature>
<feature type="helix" evidence="4">
    <location>
        <begin position="1587"/>
        <end position="1618"/>
    </location>
</feature>
<feature type="strand" evidence="4">
    <location>
        <begin position="1620"/>
        <end position="1624"/>
    </location>
</feature>
<feature type="turn" evidence="4">
    <location>
        <begin position="1626"/>
        <end position="1628"/>
    </location>
</feature>
<feature type="helix" evidence="4">
    <location>
        <begin position="1630"/>
        <end position="1652"/>
    </location>
</feature>
<feature type="helix" evidence="4">
    <location>
        <begin position="1656"/>
        <end position="1659"/>
    </location>
</feature>
<feature type="helix" evidence="4">
    <location>
        <begin position="1665"/>
        <end position="1692"/>
    </location>
</feature>
<feature type="helix" evidence="4">
    <location>
        <begin position="1695"/>
        <end position="1699"/>
    </location>
</feature>
<feature type="helix" evidence="4">
    <location>
        <begin position="1702"/>
        <end position="1710"/>
    </location>
</feature>
<feature type="helix" evidence="4">
    <location>
        <begin position="1711"/>
        <end position="1713"/>
    </location>
</feature>
<feature type="helix" evidence="4">
    <location>
        <begin position="1715"/>
        <end position="1717"/>
    </location>
</feature>
<feature type="helix" evidence="4">
    <location>
        <begin position="1719"/>
        <end position="1724"/>
    </location>
</feature>
<feature type="strand" evidence="4">
    <location>
        <begin position="1731"/>
        <end position="1734"/>
    </location>
</feature>
<feature type="strand" evidence="4">
    <location>
        <begin position="1740"/>
        <end position="1745"/>
    </location>
</feature>
<feature type="strand" evidence="4">
    <location>
        <begin position="1751"/>
        <end position="1763"/>
    </location>
</feature>
<feature type="helix" evidence="4">
    <location>
        <begin position="1766"/>
        <end position="1792"/>
    </location>
</feature>
<feature type="helix" evidence="4">
    <location>
        <begin position="1800"/>
        <end position="1808"/>
    </location>
</feature>
<feature type="helix" evidence="4">
    <location>
        <begin position="1812"/>
        <end position="1831"/>
    </location>
</feature>
<feature type="helix" evidence="4">
    <location>
        <begin position="1838"/>
        <end position="1862"/>
    </location>
</feature>
<feature type="helix" evidence="4">
    <location>
        <begin position="1869"/>
        <end position="1893"/>
    </location>
</feature>
<feature type="helix" evidence="4">
    <location>
        <begin position="1904"/>
        <end position="1907"/>
    </location>
</feature>
<feature type="strand" evidence="4">
    <location>
        <begin position="1909"/>
        <end position="1914"/>
    </location>
</feature>
<feature type="strand" evidence="4">
    <location>
        <begin position="1916"/>
        <end position="1921"/>
    </location>
</feature>
<feature type="helix" evidence="4">
    <location>
        <begin position="1922"/>
        <end position="1924"/>
    </location>
</feature>
<feature type="strand" evidence="4">
    <location>
        <begin position="1925"/>
        <end position="1929"/>
    </location>
</feature>
<feature type="strand" evidence="4">
    <location>
        <begin position="1932"/>
        <end position="1935"/>
    </location>
</feature>
<feature type="helix" evidence="4">
    <location>
        <begin position="1951"/>
        <end position="1965"/>
    </location>
</feature>
<feature type="strand" evidence="4">
    <location>
        <begin position="1969"/>
        <end position="1973"/>
    </location>
</feature>
<feature type="helix" evidence="4">
    <location>
        <begin position="1980"/>
        <end position="1990"/>
    </location>
</feature>
<feature type="strand" evidence="4">
    <location>
        <begin position="1995"/>
        <end position="1999"/>
    </location>
</feature>
<feature type="helix" evidence="4">
    <location>
        <begin position="2006"/>
        <end position="2019"/>
    </location>
</feature>
<feature type="strand" evidence="4">
    <location>
        <begin position="2022"/>
        <end position="2026"/>
    </location>
</feature>
<feature type="turn" evidence="4">
    <location>
        <begin position="2027"/>
        <end position="2029"/>
    </location>
</feature>
<feature type="helix" evidence="4">
    <location>
        <begin position="2033"/>
        <end position="2052"/>
    </location>
</feature>
<feature type="strand" evidence="4">
    <location>
        <begin position="2055"/>
        <end position="2057"/>
    </location>
</feature>
<feature type="strand" evidence="4">
    <location>
        <begin position="2072"/>
        <end position="2075"/>
    </location>
</feature>
<feature type="helix" evidence="4">
    <location>
        <begin position="2081"/>
        <end position="2083"/>
    </location>
</feature>
<feature type="helix" evidence="4">
    <location>
        <begin position="2089"/>
        <end position="2092"/>
    </location>
</feature>
<feature type="strand" evidence="4">
    <location>
        <begin position="2095"/>
        <end position="2099"/>
    </location>
</feature>
<feature type="helix" evidence="4">
    <location>
        <begin position="2105"/>
        <end position="2114"/>
    </location>
</feature>
<feature type="turn" evidence="4">
    <location>
        <begin position="2115"/>
        <end position="2117"/>
    </location>
</feature>
<feature type="helix" evidence="4">
    <location>
        <begin position="2121"/>
        <end position="2137"/>
    </location>
</feature>
<feature type="helix" evidence="4">
    <location>
        <begin position="2149"/>
        <end position="2164"/>
    </location>
</feature>
<feature type="helix" evidence="4">
    <location>
        <begin position="2177"/>
        <end position="2201"/>
    </location>
</feature>
<feature type="turn" evidence="4">
    <location>
        <begin position="2202"/>
        <end position="2206"/>
    </location>
</feature>
<feature type="helix" evidence="4">
    <location>
        <begin position="2209"/>
        <end position="2211"/>
    </location>
</feature>
<feature type="helix" evidence="4">
    <location>
        <begin position="2212"/>
        <end position="2222"/>
    </location>
</feature>
<feature type="helix" evidence="4">
    <location>
        <begin position="2234"/>
        <end position="2246"/>
    </location>
</feature>
<feature type="helix" evidence="4">
    <location>
        <begin position="2253"/>
        <end position="2266"/>
    </location>
</feature>
<feature type="strand" evidence="4">
    <location>
        <begin position="2270"/>
        <end position="2275"/>
    </location>
</feature>
<feature type="strand" evidence="4">
    <location>
        <begin position="2277"/>
        <end position="2281"/>
    </location>
</feature>
<feature type="helix" evidence="4">
    <location>
        <begin position="2282"/>
        <end position="2293"/>
    </location>
</feature>
<feature type="turn" evidence="4">
    <location>
        <begin position="2294"/>
        <end position="2298"/>
    </location>
</feature>
<feature type="strand" evidence="4">
    <location>
        <begin position="2300"/>
        <end position="2306"/>
    </location>
</feature>
<feature type="turn" evidence="4">
    <location>
        <begin position="2308"/>
        <end position="2310"/>
    </location>
</feature>
<feature type="helix" evidence="4">
    <location>
        <begin position="2313"/>
        <end position="2317"/>
    </location>
</feature>
<feature type="strand" evidence="4">
    <location>
        <begin position="2318"/>
        <end position="2320"/>
    </location>
</feature>
<feature type="turn" evidence="4">
    <location>
        <begin position="2322"/>
        <end position="2324"/>
    </location>
</feature>
<feature type="strand" evidence="4">
    <location>
        <begin position="2327"/>
        <end position="2329"/>
    </location>
</feature>
<feature type="helix" evidence="4">
    <location>
        <begin position="2331"/>
        <end position="2340"/>
    </location>
</feature>
<feature type="strand" evidence="4">
    <location>
        <begin position="2343"/>
        <end position="2345"/>
    </location>
</feature>
<feature type="helix" evidence="4">
    <location>
        <begin position="2346"/>
        <end position="2348"/>
    </location>
</feature>
<feature type="strand" evidence="4">
    <location>
        <begin position="2349"/>
        <end position="2357"/>
    </location>
</feature>
<feature type="helix" evidence="4">
    <location>
        <begin position="2361"/>
        <end position="2364"/>
    </location>
</feature>
<feature type="turn" evidence="4">
    <location>
        <begin position="2365"/>
        <end position="2367"/>
    </location>
</feature>
<feature type="helix" evidence="4">
    <location>
        <begin position="2368"/>
        <end position="2371"/>
    </location>
</feature>
<feature type="strand" evidence="4">
    <location>
        <begin position="2372"/>
        <end position="2374"/>
    </location>
</feature>
<feature type="strand" evidence="4">
    <location>
        <begin position="2391"/>
        <end position="2398"/>
    </location>
</feature>
<feature type="helix" evidence="4">
    <location>
        <begin position="2405"/>
        <end position="2409"/>
    </location>
</feature>
<feature type="strand" evidence="4">
    <location>
        <begin position="2411"/>
        <end position="2415"/>
    </location>
</feature>
<feature type="helix" evidence="4">
    <location>
        <begin position="2423"/>
        <end position="2434"/>
    </location>
</feature>
<feature type="helix" evidence="4">
    <location>
        <begin position="2441"/>
        <end position="2451"/>
    </location>
</feature>
<feature type="helix" evidence="4">
    <location>
        <begin position="2490"/>
        <end position="2506"/>
    </location>
</feature>
<feature type="helix" evidence="4">
    <location>
        <begin position="2511"/>
        <end position="2520"/>
    </location>
</feature>
<feature type="helix" evidence="4">
    <location>
        <begin position="2530"/>
        <end position="2554"/>
    </location>
</feature>
<feature type="turn" evidence="4">
    <location>
        <begin position="2555"/>
        <end position="2557"/>
    </location>
</feature>
<feature type="helix" evidence="4">
    <location>
        <begin position="2562"/>
        <end position="2582"/>
    </location>
</feature>
<feature type="helix" evidence="4">
    <location>
        <begin position="2587"/>
        <end position="2598"/>
    </location>
</feature>
<feature type="helix" evidence="4">
    <location>
        <begin position="2612"/>
        <end position="2614"/>
    </location>
</feature>
<feature type="strand" evidence="4">
    <location>
        <begin position="2615"/>
        <end position="2617"/>
    </location>
</feature>
<feature type="turn" evidence="4">
    <location>
        <begin position="2619"/>
        <end position="2621"/>
    </location>
</feature>
<feature type="strand" evidence="4">
    <location>
        <begin position="2623"/>
        <end position="2626"/>
    </location>
</feature>
<feature type="turn" evidence="4">
    <location>
        <begin position="2639"/>
        <end position="2642"/>
    </location>
</feature>
<feature type="helix" evidence="4">
    <location>
        <begin position="2651"/>
        <end position="2665"/>
    </location>
</feature>
<feature type="strand" evidence="4">
    <location>
        <begin position="2671"/>
        <end position="2675"/>
    </location>
</feature>
<feature type="helix" evidence="4">
    <location>
        <begin position="2680"/>
        <end position="2687"/>
    </location>
</feature>
<feature type="helix" evidence="4">
    <location>
        <begin position="2688"/>
        <end position="2690"/>
    </location>
</feature>
<feature type="strand" evidence="4">
    <location>
        <begin position="2694"/>
        <end position="2699"/>
    </location>
</feature>
<feature type="helix" evidence="4">
    <location>
        <begin position="2707"/>
        <end position="2717"/>
    </location>
</feature>
<feature type="strand" evidence="4">
    <location>
        <begin position="2718"/>
        <end position="2722"/>
    </location>
</feature>
<feature type="strand" evidence="4">
    <location>
        <begin position="2728"/>
        <end position="2734"/>
    </location>
</feature>
<feature type="strand" evidence="4">
    <location>
        <begin position="2738"/>
        <end position="2743"/>
    </location>
</feature>
<feature type="turn" evidence="4">
    <location>
        <begin position="2744"/>
        <end position="2747"/>
    </location>
</feature>
<feature type="helix" evidence="4">
    <location>
        <begin position="2758"/>
        <end position="2769"/>
    </location>
</feature>
<feature type="strand" evidence="4">
    <location>
        <begin position="2770"/>
        <end position="2774"/>
    </location>
</feature>
<feature type="turn" evidence="4">
    <location>
        <begin position="2775"/>
        <end position="2778"/>
    </location>
</feature>
<feature type="strand" evidence="4">
    <location>
        <begin position="2779"/>
        <end position="2792"/>
    </location>
</feature>
<feature type="helix" evidence="4">
    <location>
        <begin position="2805"/>
        <end position="2808"/>
    </location>
</feature>
<feature type="strand" evidence="4">
    <location>
        <begin position="2813"/>
        <end position="2815"/>
    </location>
</feature>
<feature type="helix" evidence="4">
    <location>
        <begin position="2821"/>
        <end position="2835"/>
    </location>
</feature>
<feature type="helix" evidence="4">
    <location>
        <begin position="2840"/>
        <end position="2842"/>
    </location>
</feature>
<feature type="helix" evidence="4">
    <location>
        <begin position="2846"/>
        <end position="2863"/>
    </location>
</feature>
<feature type="turn" evidence="4">
    <location>
        <begin position="2866"/>
        <end position="2868"/>
    </location>
</feature>
<feature type="helix" evidence="4">
    <location>
        <begin position="2876"/>
        <end position="2891"/>
    </location>
</feature>
<feature type="helix" evidence="4">
    <location>
        <begin position="2900"/>
        <end position="2913"/>
    </location>
</feature>
<feature type="turn" evidence="4">
    <location>
        <begin position="2914"/>
        <end position="2916"/>
    </location>
</feature>
<feature type="helix" evidence="4">
    <location>
        <begin position="2920"/>
        <end position="2937"/>
    </location>
</feature>
<feature type="helix" evidence="4">
    <location>
        <begin position="2943"/>
        <end position="2946"/>
    </location>
</feature>
<feature type="helix" evidence="4">
    <location>
        <begin position="2965"/>
        <end position="2977"/>
    </location>
</feature>
<feature type="helix" evidence="4">
    <location>
        <begin position="2992"/>
        <end position="3005"/>
    </location>
</feature>
<feature type="strand" evidence="4">
    <location>
        <begin position="3012"/>
        <end position="3017"/>
    </location>
</feature>
<feature type="helix" evidence="4">
    <location>
        <begin position="3022"/>
        <end position="3032"/>
    </location>
</feature>
<feature type="strand" evidence="4">
    <location>
        <begin position="3036"/>
        <end position="3038"/>
    </location>
</feature>
<feature type="helix" evidence="4">
    <location>
        <begin position="3048"/>
        <end position="3063"/>
    </location>
</feature>
<feature type="strand" evidence="4">
    <location>
        <begin position="3069"/>
        <end position="3074"/>
    </location>
</feature>
<feature type="helix" evidence="4">
    <location>
        <begin position="3075"/>
        <end position="3077"/>
    </location>
</feature>
<feature type="helix" evidence="4">
    <location>
        <begin position="3082"/>
        <end position="3093"/>
    </location>
</feature>
<feature type="turn" evidence="4">
    <location>
        <begin position="3102"/>
        <end position="3104"/>
    </location>
</feature>
<feature type="helix" evidence="4">
    <location>
        <begin position="3105"/>
        <end position="3118"/>
    </location>
</feature>
<feature type="helix" evidence="4">
    <location>
        <begin position="3126"/>
        <end position="3137"/>
    </location>
</feature>
<feature type="turn" evidence="4">
    <location>
        <begin position="3138"/>
        <end position="3140"/>
    </location>
</feature>
<feature type="strand" evidence="4">
    <location>
        <begin position="3143"/>
        <end position="3147"/>
    </location>
</feature>
<feature type="turn" evidence="4">
    <location>
        <begin position="3152"/>
        <end position="3155"/>
    </location>
</feature>
<feature type="helix" evidence="4">
    <location>
        <begin position="3157"/>
        <end position="3160"/>
    </location>
</feature>
<feature type="helix" evidence="4">
    <location>
        <begin position="3163"/>
        <end position="3167"/>
    </location>
</feature>
<feature type="strand" evidence="4">
    <location>
        <begin position="3168"/>
        <end position="3175"/>
    </location>
</feature>
<feature type="helix" evidence="4">
    <location>
        <begin position="3178"/>
        <end position="3188"/>
    </location>
</feature>
<feature type="turn" evidence="4">
    <location>
        <begin position="3189"/>
        <end position="3191"/>
    </location>
</feature>
<feature type="helix" evidence="4">
    <location>
        <begin position="3203"/>
        <end position="3210"/>
    </location>
</feature>
<feature type="helix" evidence="4">
    <location>
        <begin position="3223"/>
        <end position="3247"/>
    </location>
</feature>
<feature type="strand" evidence="4">
    <location>
        <begin position="3248"/>
        <end position="3250"/>
    </location>
</feature>
<feature type="helix" evidence="4">
    <location>
        <begin position="3257"/>
        <end position="3364"/>
    </location>
</feature>
<feature type="helix" evidence="4">
    <location>
        <begin position="3497"/>
        <end position="3600"/>
    </location>
</feature>
<feature type="helix" evidence="4">
    <location>
        <begin position="3602"/>
        <end position="3604"/>
    </location>
</feature>
<feature type="helix" evidence="4">
    <location>
        <begin position="3607"/>
        <end position="3624"/>
    </location>
</feature>
<feature type="helix" evidence="4">
    <location>
        <begin position="3634"/>
        <end position="3637"/>
    </location>
</feature>
<feature type="helix" evidence="4">
    <location>
        <begin position="3641"/>
        <end position="3649"/>
    </location>
</feature>
<feature type="helix" evidence="4">
    <location>
        <begin position="3656"/>
        <end position="3664"/>
    </location>
</feature>
<feature type="strand" evidence="4">
    <location>
        <begin position="3672"/>
        <end position="3675"/>
    </location>
</feature>
<feature type="helix" evidence="4">
    <location>
        <begin position="3680"/>
        <end position="3688"/>
    </location>
</feature>
<feature type="helix" evidence="4">
    <location>
        <begin position="3690"/>
        <end position="3692"/>
    </location>
</feature>
<feature type="strand" evidence="4">
    <location>
        <begin position="3699"/>
        <end position="3701"/>
    </location>
</feature>
<feature type="helix" evidence="4">
    <location>
        <begin position="3705"/>
        <end position="3714"/>
    </location>
</feature>
<feature type="helix" evidence="4">
    <location>
        <begin position="3731"/>
        <end position="3734"/>
    </location>
</feature>
<feature type="strand" evidence="4">
    <location>
        <begin position="3762"/>
        <end position="3766"/>
    </location>
</feature>
<feature type="helix" evidence="4">
    <location>
        <begin position="3775"/>
        <end position="3779"/>
    </location>
</feature>
<feature type="strand" evidence="4">
    <location>
        <begin position="3781"/>
        <end position="3785"/>
    </location>
</feature>
<feature type="helix" evidence="4">
    <location>
        <begin position="3790"/>
        <end position="3805"/>
    </location>
</feature>
<feature type="helix" evidence="4">
    <location>
        <begin position="3807"/>
        <end position="3818"/>
    </location>
</feature>
<feature type="turn" evidence="4">
    <location>
        <begin position="3819"/>
        <end position="3824"/>
    </location>
</feature>
<feature type="helix" evidence="4">
    <location>
        <begin position="3825"/>
        <end position="3828"/>
    </location>
</feature>
<feature type="turn" evidence="4">
    <location>
        <begin position="3829"/>
        <end position="3831"/>
    </location>
</feature>
<feature type="helix" evidence="4">
    <location>
        <begin position="3832"/>
        <end position="3839"/>
    </location>
</feature>
<feature type="helix" evidence="4">
    <location>
        <begin position="3845"/>
        <end position="3847"/>
    </location>
</feature>
<feature type="helix" evidence="4">
    <location>
        <begin position="3849"/>
        <end position="3885"/>
    </location>
</feature>
<feature type="helix" evidence="4">
    <location>
        <begin position="3887"/>
        <end position="3900"/>
    </location>
</feature>
<feature type="helix" evidence="4">
    <location>
        <begin position="3902"/>
        <end position="3905"/>
    </location>
</feature>
<feature type="helix" evidence="4">
    <location>
        <begin position="3913"/>
        <end position="3924"/>
    </location>
</feature>
<feature type="helix" evidence="4">
    <location>
        <begin position="3928"/>
        <end position="3930"/>
    </location>
</feature>
<feature type="helix" evidence="4">
    <location>
        <begin position="3936"/>
        <end position="3955"/>
    </location>
</feature>
<feature type="turn" evidence="4">
    <location>
        <begin position="3956"/>
        <end position="3958"/>
    </location>
</feature>
<feature type="helix" evidence="4">
    <location>
        <begin position="3961"/>
        <end position="3963"/>
    </location>
</feature>
<feature type="helix" evidence="4">
    <location>
        <begin position="3966"/>
        <end position="3975"/>
    </location>
</feature>
<feature type="turn" evidence="4">
    <location>
        <begin position="3976"/>
        <end position="3978"/>
    </location>
</feature>
<feature type="helix" evidence="4">
    <location>
        <begin position="3985"/>
        <end position="3993"/>
    </location>
</feature>
<feature type="turn" evidence="4">
    <location>
        <begin position="3994"/>
        <end position="3997"/>
    </location>
</feature>
<feature type="helix" evidence="4">
    <location>
        <begin position="3998"/>
        <end position="4000"/>
    </location>
</feature>
<feature type="helix" evidence="4">
    <location>
        <begin position="4006"/>
        <end position="4008"/>
    </location>
</feature>
<feature type="turn" evidence="4">
    <location>
        <begin position="4009"/>
        <end position="4011"/>
    </location>
</feature>
<feature type="helix" evidence="4">
    <location>
        <begin position="4014"/>
        <end position="4026"/>
    </location>
</feature>
<feature type="helix" evidence="4">
    <location>
        <begin position="4028"/>
        <end position="4030"/>
    </location>
</feature>
<feature type="helix" evidence="4">
    <location>
        <begin position="4033"/>
        <end position="4039"/>
    </location>
</feature>
<feature type="helix" evidence="4">
    <location>
        <begin position="4041"/>
        <end position="4047"/>
    </location>
</feature>
<feature type="helix" evidence="4">
    <location>
        <begin position="4062"/>
        <end position="4069"/>
    </location>
</feature>
<feature type="helix" evidence="4">
    <location>
        <begin position="4075"/>
        <end position="4089"/>
    </location>
</feature>
<feature type="helix" evidence="4">
    <location>
        <begin position="4091"/>
        <end position="4093"/>
    </location>
</feature>
<feature type="helix" evidence="4">
    <location>
        <begin position="4094"/>
        <end position="4105"/>
    </location>
</feature>
<feature type="turn" evidence="4">
    <location>
        <begin position="4108"/>
        <end position="4111"/>
    </location>
</feature>
<feature type="helix" evidence="4">
    <location>
        <begin position="4118"/>
        <end position="4124"/>
    </location>
</feature>
<feature type="helix" evidence="4">
    <location>
        <begin position="4143"/>
        <end position="4153"/>
    </location>
</feature>
<feature type="helix" evidence="4">
    <location>
        <begin position="4165"/>
        <end position="4181"/>
    </location>
</feature>
<feature type="strand" evidence="4">
    <location>
        <begin position="4184"/>
        <end position="4186"/>
    </location>
</feature>
<feature type="helix" evidence="4">
    <location>
        <begin position="4190"/>
        <end position="4192"/>
    </location>
</feature>
<feature type="turn" evidence="4">
    <location>
        <begin position="4194"/>
        <end position="4196"/>
    </location>
</feature>
<feature type="helix" evidence="4">
    <location>
        <begin position="4197"/>
        <end position="4205"/>
    </location>
</feature>
<feature type="strand" evidence="4">
    <location>
        <begin position="4214"/>
        <end position="4216"/>
    </location>
</feature>
<feature type="strand" evidence="4">
    <location>
        <begin position="4219"/>
        <end position="4221"/>
    </location>
</feature>
<feature type="helix" evidence="4">
    <location>
        <begin position="4227"/>
        <end position="4231"/>
    </location>
</feature>
<feature type="strand" evidence="4">
    <location>
        <begin position="4233"/>
        <end position="4235"/>
    </location>
</feature>
<feature type="helix" evidence="4">
    <location>
        <begin position="4244"/>
        <end position="4252"/>
    </location>
</feature>
<feature type="helix" evidence="4">
    <location>
        <begin position="4257"/>
        <end position="4260"/>
    </location>
</feature>
<feature type="strand" evidence="4">
    <location>
        <begin position="4262"/>
        <end position="4264"/>
    </location>
</feature>
<feature type="helix" evidence="4">
    <location>
        <begin position="4266"/>
        <end position="4283"/>
    </location>
</feature>
<feature type="helix" evidence="4">
    <location>
        <begin position="4284"/>
        <end position="4287"/>
    </location>
</feature>
<feature type="turn" evidence="4">
    <location>
        <begin position="4288"/>
        <end position="4290"/>
    </location>
</feature>
<feature type="helix" evidence="4">
    <location>
        <begin position="4300"/>
        <end position="4317"/>
    </location>
</feature>
<feature type="turn" evidence="4">
    <location>
        <begin position="4326"/>
        <end position="4328"/>
    </location>
</feature>
<feature type="helix" evidence="4">
    <location>
        <begin position="4331"/>
        <end position="4340"/>
    </location>
</feature>
<feature type="turn" evidence="4">
    <location>
        <begin position="4341"/>
        <end position="4343"/>
    </location>
</feature>
<feature type="strand" evidence="4">
    <location>
        <begin position="4349"/>
        <end position="4351"/>
    </location>
</feature>
<feature type="helix" evidence="4">
    <location>
        <begin position="4352"/>
        <end position="4363"/>
    </location>
</feature>
<feature type="helix" evidence="4">
    <location>
        <begin position="4366"/>
        <end position="4369"/>
    </location>
</feature>
<feature type="strand" evidence="4">
    <location>
        <begin position="4370"/>
        <end position="4372"/>
    </location>
</feature>
<feature type="strand" evidence="4">
    <location>
        <begin position="4374"/>
        <end position="4376"/>
    </location>
</feature>
<feature type="helix" evidence="4">
    <location>
        <begin position="4377"/>
        <end position="4379"/>
    </location>
</feature>
<feature type="helix" evidence="4">
    <location>
        <begin position="4389"/>
        <end position="4396"/>
    </location>
</feature>
<feature type="helix" evidence="4">
    <location>
        <begin position="4405"/>
        <end position="4408"/>
    </location>
</feature>
<feature type="helix" evidence="4">
    <location>
        <begin position="4414"/>
        <end position="4435"/>
    </location>
</feature>
<feature type="turn" evidence="4">
    <location>
        <begin position="4436"/>
        <end position="4438"/>
    </location>
</feature>
<feature type="helix" evidence="4">
    <location>
        <begin position="4456"/>
        <end position="4464"/>
    </location>
</feature>
<feature type="helix" evidence="4">
    <location>
        <begin position="4496"/>
        <end position="4520"/>
    </location>
</feature>
<feature type="helix" evidence="4">
    <location>
        <begin position="4532"/>
        <end position="4543"/>
    </location>
</feature>
<feature type="turn" evidence="4">
    <location>
        <begin position="4548"/>
        <end position="4550"/>
    </location>
</feature>
<feature type="helix" evidence="4">
    <location>
        <begin position="4561"/>
        <end position="4580"/>
    </location>
</feature>
<feature type="helix" evidence="4">
    <location>
        <begin position="4591"/>
        <end position="4593"/>
    </location>
</feature>
<feature type="helix" evidence="4">
    <location>
        <begin position="4597"/>
        <end position="4611"/>
    </location>
</feature>
<feature type="strand" evidence="4">
    <location>
        <begin position="4635"/>
        <end position="4639"/>
    </location>
</feature>
<feature type="strand" evidence="4">
    <location>
        <begin position="4643"/>
        <end position="4646"/>
    </location>
</feature>
<feature type="strand" evidence="4">
    <location>
        <begin position="4651"/>
        <end position="4655"/>
    </location>
</feature>
<feature type="strand" evidence="4">
    <location>
        <begin position="4658"/>
        <end position="4663"/>
    </location>
</feature>
<feature type="strand" evidence="4">
    <location>
        <begin position="4667"/>
        <end position="4669"/>
    </location>
</feature>
<feature type="helix" evidence="4">
    <location>
        <begin position="4682"/>
        <end position="4684"/>
    </location>
</feature>
<feature type="strand" evidence="4">
    <location>
        <begin position="4685"/>
        <end position="4693"/>
    </location>
</feature>
<feature type="strand" evidence="4">
    <location>
        <begin position="4699"/>
        <end position="4705"/>
    </location>
</feature>
<feature type="helix" evidence="4">
    <location>
        <begin position="4713"/>
        <end position="4717"/>
    </location>
</feature>
<feature type="strand" evidence="4">
    <location>
        <begin position="4722"/>
        <end position="4725"/>
    </location>
</feature>
<reference key="1">
    <citation type="journal article" date="1992" name="J. Cell Biol.">
        <title>Dynein from Dictyostelium: primary structure comparisons between a cytoplasmic motor enzyme and flagellar dynein.</title>
        <authorList>
            <person name="Koonce M.P."/>
            <person name="Grissom P.M."/>
            <person name="McIntosh J.R."/>
        </authorList>
    </citation>
    <scope>NUCLEOTIDE SEQUENCE [MRNA]</scope>
    <source>
        <strain>AX3</strain>
    </source>
</reference>
<reference key="2">
    <citation type="journal article" date="2002" name="Nature">
        <title>Sequence and analysis of chromosome 2 of Dictyostelium discoideum.</title>
        <authorList>
            <person name="Gloeckner G."/>
            <person name="Eichinger L."/>
            <person name="Szafranski K."/>
            <person name="Pachebat J.A."/>
            <person name="Bankier A.T."/>
            <person name="Dear P.H."/>
            <person name="Lehmann R."/>
            <person name="Baumgart C."/>
            <person name="Parra G."/>
            <person name="Abril J.F."/>
            <person name="Guigo R."/>
            <person name="Kumpf K."/>
            <person name="Tunggal B."/>
            <person name="Cox E.C."/>
            <person name="Quail M.A."/>
            <person name="Platzer M."/>
            <person name="Rosenthal A."/>
            <person name="Noegel A.A."/>
        </authorList>
    </citation>
    <scope>NUCLEOTIDE SEQUENCE [LARGE SCALE GENOMIC DNA]</scope>
    <source>
        <strain>AX4</strain>
    </source>
</reference>
<reference key="3">
    <citation type="journal article" date="2005" name="Nature">
        <title>The genome of the social amoeba Dictyostelium discoideum.</title>
        <authorList>
            <person name="Eichinger L."/>
            <person name="Pachebat J.A."/>
            <person name="Gloeckner G."/>
            <person name="Rajandream M.A."/>
            <person name="Sucgang R."/>
            <person name="Berriman M."/>
            <person name="Song J."/>
            <person name="Olsen R."/>
            <person name="Szafranski K."/>
            <person name="Xu Q."/>
            <person name="Tunggal B."/>
            <person name="Kummerfeld S."/>
            <person name="Madera M."/>
            <person name="Konfortov B.A."/>
            <person name="Rivero F."/>
            <person name="Bankier A.T."/>
            <person name="Lehmann R."/>
            <person name="Hamlin N."/>
            <person name="Davies R."/>
            <person name="Gaudet P."/>
            <person name="Fey P."/>
            <person name="Pilcher K."/>
            <person name="Chen G."/>
            <person name="Saunders D."/>
            <person name="Sodergren E.J."/>
            <person name="Davis P."/>
            <person name="Kerhornou A."/>
            <person name="Nie X."/>
            <person name="Hall N."/>
            <person name="Anjard C."/>
            <person name="Hemphill L."/>
            <person name="Bason N."/>
            <person name="Farbrother P."/>
            <person name="Desany B."/>
            <person name="Just E."/>
            <person name="Morio T."/>
            <person name="Rost R."/>
            <person name="Churcher C.M."/>
            <person name="Cooper J."/>
            <person name="Haydock S."/>
            <person name="van Driessche N."/>
            <person name="Cronin A."/>
            <person name="Goodhead I."/>
            <person name="Muzny D.M."/>
            <person name="Mourier T."/>
            <person name="Pain A."/>
            <person name="Lu M."/>
            <person name="Harper D."/>
            <person name="Lindsay R."/>
            <person name="Hauser H."/>
            <person name="James K.D."/>
            <person name="Quiles M."/>
            <person name="Madan Babu M."/>
            <person name="Saito T."/>
            <person name="Buchrieser C."/>
            <person name="Wardroper A."/>
            <person name="Felder M."/>
            <person name="Thangavelu M."/>
            <person name="Johnson D."/>
            <person name="Knights A."/>
            <person name="Loulseged H."/>
            <person name="Mungall K.L."/>
            <person name="Oliver K."/>
            <person name="Price C."/>
            <person name="Quail M.A."/>
            <person name="Urushihara H."/>
            <person name="Hernandez J."/>
            <person name="Rabbinowitsch E."/>
            <person name="Steffen D."/>
            <person name="Sanders M."/>
            <person name="Ma J."/>
            <person name="Kohara Y."/>
            <person name="Sharp S."/>
            <person name="Simmonds M.N."/>
            <person name="Spiegler S."/>
            <person name="Tivey A."/>
            <person name="Sugano S."/>
            <person name="White B."/>
            <person name="Walker D."/>
            <person name="Woodward J.R."/>
            <person name="Winckler T."/>
            <person name="Tanaka Y."/>
            <person name="Shaulsky G."/>
            <person name="Schleicher M."/>
            <person name="Weinstock G.M."/>
            <person name="Rosenthal A."/>
            <person name="Cox E.C."/>
            <person name="Chisholm R.L."/>
            <person name="Gibbs R.A."/>
            <person name="Loomis W.F."/>
            <person name="Platzer M."/>
            <person name="Kay R.R."/>
            <person name="Williams J.G."/>
            <person name="Dear P.H."/>
            <person name="Noegel A.A."/>
            <person name="Barrell B.G."/>
            <person name="Kuspa A."/>
        </authorList>
    </citation>
    <scope>NUCLEOTIDE SEQUENCE [LARGE SCALE GENOMIC DNA]</scope>
    <source>
        <strain>AX4</strain>
    </source>
</reference>
<reference key="4">
    <citation type="journal article" date="1994" name="J. Eukaryot. Microbiol.">
        <title>Molecular characterization of a cytoplasmic dynein from Dictyostelium.</title>
        <authorList>
            <person name="Koonce M.P."/>
            <person name="Grissom P.M."/>
            <person name="Lyon M."/>
            <person name="Pope T."/>
            <person name="McIntosh J.R."/>
        </authorList>
    </citation>
    <scope>CHARACTERIZATION</scope>
</reference>
<dbReference type="EMBL" id="Z15124">
    <property type="protein sequence ID" value="CAA78827.1"/>
    <property type="status" value="ALT_FRAME"/>
    <property type="molecule type" value="mRNA"/>
</dbReference>
<dbReference type="EMBL" id="AAFI02000014">
    <property type="protein sequence ID" value="EAL69258.1"/>
    <property type="molecule type" value="Genomic_DNA"/>
</dbReference>
<dbReference type="PIR" id="A44357">
    <property type="entry name" value="A44357"/>
</dbReference>
<dbReference type="RefSeq" id="XP_643185.1">
    <property type="nucleotide sequence ID" value="XM_638093.1"/>
</dbReference>
<dbReference type="PDB" id="3J6P">
    <property type="method" value="EM"/>
    <property type="resolution" value="8.20 A"/>
    <property type="chains" value="D=3382-3489"/>
</dbReference>
<dbReference type="PDB" id="3VKG">
    <property type="method" value="X-ray"/>
    <property type="resolution" value="2.81 A"/>
    <property type="chains" value="A/B=1388-3371, A/B=3496-4730"/>
</dbReference>
<dbReference type="PDB" id="3VKH">
    <property type="method" value="X-ray"/>
    <property type="resolution" value="3.80 A"/>
    <property type="chains" value="A/B=1388-4730"/>
</dbReference>
<dbReference type="PDBsum" id="3J6P"/>
<dbReference type="PDBsum" id="3VKG"/>
<dbReference type="PDBsum" id="3VKH"/>
<dbReference type="BMRB" id="P34036"/>
<dbReference type="SMR" id="P34036"/>
<dbReference type="DIP" id="DIP-59087N"/>
<dbReference type="FunCoup" id="P34036">
    <property type="interactions" value="718"/>
</dbReference>
<dbReference type="STRING" id="44689.P34036"/>
<dbReference type="TCDB" id="1.I.1.1.5">
    <property type="family name" value="the nuclear pore complex (npc) family"/>
</dbReference>
<dbReference type="GlyGen" id="P34036">
    <property type="glycosylation" value="2 sites"/>
</dbReference>
<dbReference type="PaxDb" id="44689-DDB0185096"/>
<dbReference type="EnsemblProtists" id="EAL69258">
    <property type="protein sequence ID" value="EAL69258"/>
    <property type="gene ID" value="DDB_G0276355"/>
</dbReference>
<dbReference type="GeneID" id="8620457"/>
<dbReference type="KEGG" id="ddi:DDB_G0276355"/>
<dbReference type="dictyBase" id="DDB_G0276355">
    <property type="gene designation" value="dhcA"/>
</dbReference>
<dbReference type="VEuPathDB" id="AmoebaDB:DDB_G0276355"/>
<dbReference type="eggNOG" id="KOG3595">
    <property type="taxonomic scope" value="Eukaryota"/>
</dbReference>
<dbReference type="HOGENOM" id="CLU_000038_7_0_1"/>
<dbReference type="InParanoid" id="P34036"/>
<dbReference type="OMA" id="NERQMTR"/>
<dbReference type="PhylomeDB" id="P34036"/>
<dbReference type="BRENDA" id="5.6.1.2">
    <property type="organism ID" value="1939"/>
</dbReference>
<dbReference type="Reactome" id="R-DDI-6798695">
    <property type="pathway name" value="Neutrophil degranulation"/>
</dbReference>
<dbReference type="Reactome" id="R-DDI-6807878">
    <property type="pathway name" value="COPI-mediated anterograde transport"/>
</dbReference>
<dbReference type="Reactome" id="R-DDI-9646399">
    <property type="pathway name" value="Aggrephagy"/>
</dbReference>
<dbReference type="EvolutionaryTrace" id="P34036"/>
<dbReference type="PRO" id="PR:P34036"/>
<dbReference type="Proteomes" id="UP000002195">
    <property type="component" value="Chromosome 2"/>
</dbReference>
<dbReference type="GO" id="GO:1904949">
    <property type="term" value="C:ATPase complex"/>
    <property type="evidence" value="ECO:0000314"/>
    <property type="project" value="dictyBase"/>
</dbReference>
<dbReference type="GO" id="GO:0005938">
    <property type="term" value="C:cell cortex"/>
    <property type="evidence" value="ECO:0000314"/>
    <property type="project" value="dictyBase"/>
</dbReference>
<dbReference type="GO" id="GO:0005813">
    <property type="term" value="C:centrosome"/>
    <property type="evidence" value="ECO:0000314"/>
    <property type="project" value="dictyBase"/>
</dbReference>
<dbReference type="GO" id="GO:0005737">
    <property type="term" value="C:cytoplasm"/>
    <property type="evidence" value="ECO:0000314"/>
    <property type="project" value="dictyBase"/>
</dbReference>
<dbReference type="GO" id="GO:0005868">
    <property type="term" value="C:cytoplasmic dynein complex"/>
    <property type="evidence" value="ECO:0000314"/>
    <property type="project" value="dictyBase"/>
</dbReference>
<dbReference type="GO" id="GO:0005881">
    <property type="term" value="C:cytoplasmic microtubule"/>
    <property type="evidence" value="ECO:0000318"/>
    <property type="project" value="GO_Central"/>
</dbReference>
<dbReference type="GO" id="GO:0036186">
    <property type="term" value="C:early phagosome membrane"/>
    <property type="evidence" value="ECO:0000314"/>
    <property type="project" value="dictyBase"/>
</dbReference>
<dbReference type="GO" id="GO:0030139">
    <property type="term" value="C:endocytic vesicle"/>
    <property type="evidence" value="ECO:0000314"/>
    <property type="project" value="dictyBase"/>
</dbReference>
<dbReference type="GO" id="GO:0005874">
    <property type="term" value="C:microtubule"/>
    <property type="evidence" value="ECO:0000314"/>
    <property type="project" value="dictyBase"/>
</dbReference>
<dbReference type="GO" id="GO:0061474">
    <property type="term" value="C:phagolysosome membrane"/>
    <property type="evidence" value="ECO:0000314"/>
    <property type="project" value="dictyBase"/>
</dbReference>
<dbReference type="GO" id="GO:0005524">
    <property type="term" value="F:ATP binding"/>
    <property type="evidence" value="ECO:0000314"/>
    <property type="project" value="dictyBase"/>
</dbReference>
<dbReference type="GO" id="GO:0016887">
    <property type="term" value="F:ATP hydrolysis activity"/>
    <property type="evidence" value="ECO:0007669"/>
    <property type="project" value="InterPro"/>
</dbReference>
<dbReference type="GO" id="GO:0043273">
    <property type="term" value="F:CTPase activity"/>
    <property type="evidence" value="ECO:0000314"/>
    <property type="project" value="dictyBase"/>
</dbReference>
<dbReference type="GO" id="GO:0045505">
    <property type="term" value="F:dynein intermediate chain binding"/>
    <property type="evidence" value="ECO:0000353"/>
    <property type="project" value="FlyBase"/>
</dbReference>
<dbReference type="GO" id="GO:0051959">
    <property type="term" value="F:dynein light intermediate chain binding"/>
    <property type="evidence" value="ECO:0000318"/>
    <property type="project" value="GO_Central"/>
</dbReference>
<dbReference type="GO" id="GO:0042802">
    <property type="term" value="F:identical protein binding"/>
    <property type="evidence" value="ECO:0000353"/>
    <property type="project" value="dictyBase"/>
</dbReference>
<dbReference type="GO" id="GO:0008017">
    <property type="term" value="F:microtubule binding"/>
    <property type="evidence" value="ECO:0000314"/>
    <property type="project" value="dictyBase"/>
</dbReference>
<dbReference type="GO" id="GO:0003777">
    <property type="term" value="F:microtubule motor activity"/>
    <property type="evidence" value="ECO:0000314"/>
    <property type="project" value="dictyBase"/>
</dbReference>
<dbReference type="GO" id="GO:0008569">
    <property type="term" value="F:minus-end-directed microtubule motor activity"/>
    <property type="evidence" value="ECO:0000314"/>
    <property type="project" value="dictyBase"/>
</dbReference>
<dbReference type="GO" id="GO:0015631">
    <property type="term" value="F:tubulin binding"/>
    <property type="evidence" value="ECO:0000314"/>
    <property type="project" value="dictyBase"/>
</dbReference>
<dbReference type="GO" id="GO:0031122">
    <property type="term" value="P:cytoplasmic microtubule organization"/>
    <property type="evidence" value="ECO:0000315"/>
    <property type="project" value="dictyBase"/>
</dbReference>
<dbReference type="GO" id="GO:0072382">
    <property type="term" value="P:minus-end-directed vesicle transport along microtubule"/>
    <property type="evidence" value="ECO:0000314"/>
    <property type="project" value="dictyBase"/>
</dbReference>
<dbReference type="GO" id="GO:0090307">
    <property type="term" value="P:mitotic spindle assembly"/>
    <property type="evidence" value="ECO:0000315"/>
    <property type="project" value="dictyBase"/>
</dbReference>
<dbReference type="GO" id="GO:0007052">
    <property type="term" value="P:mitotic spindle organization"/>
    <property type="evidence" value="ECO:0000318"/>
    <property type="project" value="GO_Central"/>
</dbReference>
<dbReference type="GO" id="GO:0007097">
    <property type="term" value="P:nuclear migration"/>
    <property type="evidence" value="ECO:0000318"/>
    <property type="project" value="GO_Central"/>
</dbReference>
<dbReference type="GO" id="GO:0090382">
    <property type="term" value="P:phagosome maturation"/>
    <property type="evidence" value="ECO:0000314"/>
    <property type="project" value="dictyBase"/>
</dbReference>
<dbReference type="CDD" id="cd00009">
    <property type="entry name" value="AAA"/>
    <property type="match status" value="1"/>
</dbReference>
<dbReference type="FunFam" id="1.20.920.20:FF:000002">
    <property type="entry name" value="Cytoplasmic dynein 1 heavy chain"/>
    <property type="match status" value="1"/>
</dbReference>
<dbReference type="FunFam" id="3.40.50.300:FF:000122">
    <property type="entry name" value="Cytoplasmic dynein 1 heavy chain"/>
    <property type="match status" value="1"/>
</dbReference>
<dbReference type="FunFam" id="1.10.472.130:FF:000002">
    <property type="entry name" value="Cytoplasmic dynein heavy chain 1"/>
    <property type="match status" value="1"/>
</dbReference>
<dbReference type="FunFam" id="1.10.8.710:FF:000005">
    <property type="entry name" value="Cytoplasmic dynein heavy chain 1"/>
    <property type="match status" value="1"/>
</dbReference>
<dbReference type="FunFam" id="1.20.140.100:FF:000002">
    <property type="entry name" value="Cytoplasmic dynein heavy chain 1"/>
    <property type="match status" value="1"/>
</dbReference>
<dbReference type="FunFam" id="1.20.58.1120:FF:000003">
    <property type="entry name" value="Cytoplasmic dynein heavy chain 1"/>
    <property type="match status" value="1"/>
</dbReference>
<dbReference type="FunFam" id="1.20.920.30:FF:000001">
    <property type="entry name" value="Cytoplasmic dynein heavy chain 1"/>
    <property type="match status" value="1"/>
</dbReference>
<dbReference type="FunFam" id="3.20.180.20:FF:000002">
    <property type="entry name" value="Cytoplasmic dynein heavy chain 1"/>
    <property type="match status" value="1"/>
</dbReference>
<dbReference type="FunFam" id="3.40.50.300:FF:000071">
    <property type="entry name" value="Cytoplasmic dynein heavy chain 1"/>
    <property type="match status" value="1"/>
</dbReference>
<dbReference type="FunFam" id="3.40.50.300:FF:000517">
    <property type="entry name" value="Cytoplasmic dynein heavy chain 1"/>
    <property type="match status" value="1"/>
</dbReference>
<dbReference type="FunFam" id="1.10.8.720:FF:000003">
    <property type="entry name" value="Cytoplasmic dynein heavy chain 2"/>
    <property type="match status" value="1"/>
</dbReference>
<dbReference type="FunFam" id="1.20.1270.280:FF:000004">
    <property type="entry name" value="Cytoplasmic dynein heavy chain 2"/>
    <property type="match status" value="1"/>
</dbReference>
<dbReference type="FunFam" id="3.10.490.20:FF:000004">
    <property type="entry name" value="Cytoplasmic dynein heavy chain 2"/>
    <property type="match status" value="1"/>
</dbReference>
<dbReference type="FunFam" id="3.40.50.300:FF:000373">
    <property type="entry name" value="Cytoplasmic dynein heavy chain 2"/>
    <property type="match status" value="1"/>
</dbReference>
<dbReference type="FunFam" id="1.10.287.2620:FF:000008">
    <property type="entry name" value="Dynein heavy chain, cytoplasmic"/>
    <property type="match status" value="1"/>
</dbReference>
<dbReference type="Gene3D" id="1.10.287.2620">
    <property type="match status" value="1"/>
</dbReference>
<dbReference type="Gene3D" id="1.10.472.130">
    <property type="match status" value="1"/>
</dbReference>
<dbReference type="Gene3D" id="1.10.8.1220">
    <property type="match status" value="1"/>
</dbReference>
<dbReference type="Gene3D" id="1.10.8.710">
    <property type="match status" value="1"/>
</dbReference>
<dbReference type="Gene3D" id="1.20.1270.280">
    <property type="match status" value="1"/>
</dbReference>
<dbReference type="Gene3D" id="1.20.58.1120">
    <property type="match status" value="1"/>
</dbReference>
<dbReference type="Gene3D" id="1.20.920.20">
    <property type="match status" value="2"/>
</dbReference>
<dbReference type="Gene3D" id="1.20.920.30">
    <property type="match status" value="1"/>
</dbReference>
<dbReference type="Gene3D" id="1.20.920.60">
    <property type="match status" value="1"/>
</dbReference>
<dbReference type="Gene3D" id="3.10.490.20">
    <property type="match status" value="1"/>
</dbReference>
<dbReference type="Gene3D" id="6.10.140.1060">
    <property type="match status" value="1"/>
</dbReference>
<dbReference type="Gene3D" id="1.20.140.100">
    <property type="entry name" value="Dynein heavy chain, N-terminal domain 2"/>
    <property type="match status" value="1"/>
</dbReference>
<dbReference type="Gene3D" id="3.20.180.20">
    <property type="entry name" value="Dynein heavy chain, N-terminal domain 2"/>
    <property type="match status" value="1"/>
</dbReference>
<dbReference type="Gene3D" id="3.40.50.300">
    <property type="entry name" value="P-loop containing nucleotide triphosphate hydrolases"/>
    <property type="match status" value="5"/>
</dbReference>
<dbReference type="Gene3D" id="1.10.8.720">
    <property type="entry name" value="Region D6 of dynein motor"/>
    <property type="match status" value="1"/>
</dbReference>
<dbReference type="InterPro" id="IPR003593">
    <property type="entry name" value="AAA+_ATPase"/>
</dbReference>
<dbReference type="InterPro" id="IPR035699">
    <property type="entry name" value="AAA_6"/>
</dbReference>
<dbReference type="InterPro" id="IPR035706">
    <property type="entry name" value="AAA_9"/>
</dbReference>
<dbReference type="InterPro" id="IPR041658">
    <property type="entry name" value="AAA_lid_11"/>
</dbReference>
<dbReference type="InterPro" id="IPR042219">
    <property type="entry name" value="AAA_lid_11_sf"/>
</dbReference>
<dbReference type="InterPro" id="IPR026983">
    <property type="entry name" value="DHC"/>
</dbReference>
<dbReference type="InterPro" id="IPR054354">
    <property type="entry name" value="DYNC2H1-like_lid"/>
</dbReference>
<dbReference type="InterPro" id="IPR042222">
    <property type="entry name" value="Dynein_2_N"/>
</dbReference>
<dbReference type="InterPro" id="IPR043157">
    <property type="entry name" value="Dynein_AAA1S"/>
</dbReference>
<dbReference type="InterPro" id="IPR041466">
    <property type="entry name" value="Dynein_AAA5_ext"/>
</dbReference>
<dbReference type="InterPro" id="IPR041228">
    <property type="entry name" value="Dynein_C"/>
</dbReference>
<dbReference type="InterPro" id="IPR043160">
    <property type="entry name" value="Dynein_C_barrel"/>
</dbReference>
<dbReference type="InterPro" id="IPR024743">
    <property type="entry name" value="Dynein_HC_stalk"/>
</dbReference>
<dbReference type="InterPro" id="IPR024317">
    <property type="entry name" value="Dynein_heavy_chain_D4_dom"/>
</dbReference>
<dbReference type="InterPro" id="IPR004273">
    <property type="entry name" value="Dynein_heavy_D6_P-loop"/>
</dbReference>
<dbReference type="InterPro" id="IPR013602">
    <property type="entry name" value="Dynein_heavy_linker"/>
</dbReference>
<dbReference type="InterPro" id="IPR013594">
    <property type="entry name" value="Dynein_heavy_tail"/>
</dbReference>
<dbReference type="InterPro" id="IPR042228">
    <property type="entry name" value="Dynein_linker_3"/>
</dbReference>
<dbReference type="InterPro" id="IPR027417">
    <property type="entry name" value="P-loop_NTPase"/>
</dbReference>
<dbReference type="PANTHER" id="PTHR46532:SF4">
    <property type="entry name" value="AAA+ ATPASE DOMAIN-CONTAINING PROTEIN"/>
    <property type="match status" value="1"/>
</dbReference>
<dbReference type="PANTHER" id="PTHR46532">
    <property type="entry name" value="MALE FERTILITY FACTOR KL5"/>
    <property type="match status" value="1"/>
</dbReference>
<dbReference type="Pfam" id="PF12774">
    <property type="entry name" value="AAA_6"/>
    <property type="match status" value="1"/>
</dbReference>
<dbReference type="Pfam" id="PF12775">
    <property type="entry name" value="AAA_7"/>
    <property type="match status" value="1"/>
</dbReference>
<dbReference type="Pfam" id="PF12780">
    <property type="entry name" value="AAA_8"/>
    <property type="match status" value="1"/>
</dbReference>
<dbReference type="Pfam" id="PF12781">
    <property type="entry name" value="AAA_9"/>
    <property type="match status" value="1"/>
</dbReference>
<dbReference type="Pfam" id="PF18198">
    <property type="entry name" value="AAA_lid_11"/>
    <property type="match status" value="1"/>
</dbReference>
<dbReference type="Pfam" id="PF08385">
    <property type="entry name" value="DHC_N1"/>
    <property type="match status" value="1"/>
</dbReference>
<dbReference type="Pfam" id="PF08393">
    <property type="entry name" value="DHC_N2"/>
    <property type="match status" value="1"/>
</dbReference>
<dbReference type="Pfam" id="PF22597">
    <property type="entry name" value="DYN_lid"/>
    <property type="match status" value="1"/>
</dbReference>
<dbReference type="Pfam" id="PF17852">
    <property type="entry name" value="Dynein_AAA_lid"/>
    <property type="match status" value="1"/>
</dbReference>
<dbReference type="Pfam" id="PF18199">
    <property type="entry name" value="Dynein_C"/>
    <property type="match status" value="1"/>
</dbReference>
<dbReference type="Pfam" id="PF03028">
    <property type="entry name" value="Dynein_heavy"/>
    <property type="match status" value="1"/>
</dbReference>
<dbReference type="Pfam" id="PF12777">
    <property type="entry name" value="MT"/>
    <property type="match status" value="1"/>
</dbReference>
<dbReference type="SMART" id="SM00382">
    <property type="entry name" value="AAA"/>
    <property type="match status" value="3"/>
</dbReference>
<dbReference type="SUPFAM" id="SSF52540">
    <property type="entry name" value="P-loop containing nucleoside triphosphate hydrolases"/>
    <property type="match status" value="4"/>
</dbReference>
<keyword id="KW-0002">3D-structure</keyword>
<keyword id="KW-0067">ATP-binding</keyword>
<keyword id="KW-0175">Coiled coil</keyword>
<keyword id="KW-0963">Cytoplasm</keyword>
<keyword id="KW-0206">Cytoskeleton</keyword>
<keyword id="KW-0243">Dynein</keyword>
<keyword id="KW-0493">Microtubule</keyword>
<keyword id="KW-0505">Motor protein</keyword>
<keyword id="KW-0547">Nucleotide-binding</keyword>
<keyword id="KW-1185">Reference proteome</keyword>
<keyword id="KW-0677">Repeat</keyword>
<gene>
    <name type="primary">dhcA</name>
    <name type="ORF">DDB_G0276355</name>
</gene>
<sequence>MEDQQINVDSPTSGTNTPPVVTPTTSVISEQTLEETVKYLCKICPTLLDGDQSVFQNNLSNQIPPENMNKLKKFISDSKIPVLLIQKTNPTINSSNQTSTTTSSSSSSDDNTLTSSQQQSKESFNFEIEVKFGGENKSTLAIVKRIPESIVEYSSNKSIASQLQVLNLGDGSPMDTLHNYIHNSVAPFVRSYILSASKDDATTPSGGSADKSITSQNLDKEMKQSIGAVNQKIAELEISLYNCKQQVQIPEVTLAINPEIKSISKRLKETTGRTIKPDDLGDKASSPEFLNLLQAGTTTWAKNIQNVTKHNLIENLPSDVSTSQEINFWIELETSLQNIDQQLKSPEVEVTLATLRQAKRFIASAPFETDTIGVRKAMDKVQSYKTLFKDFPITPLLTATDLDSISSSVAAIFSHLKKTKNPYYPIPRYLSFLEAIGRDMCNKVYQILRQKNLMNIDYNDFEHLNRSVRALFTLWDDQFGAFRDILRDLAKKRGNERIPLIVNIDNRIQLVIIKIGKFRKQHEDLKNVVSNVLPGSQLGGGVVQTNTSNPTSPQKQEINAIEEINQAYLEFKEIDVLQLSKEGEEIWDAVVKRYNSRTDRVETYITVKLRDRLATAKNANEMFRVYQKFKDLLKRPKIRGATHEYESQLIERVKEDIRVLHDKFKMQYNNSEAYYMSQLRDLPPVSGAIIWARQIERQLDTYMKRVANVLGDSWESDAEGQKLKSESDQFRHKLNTDHIFSKWADETEKRSFDISGRILTIVKRGNKLALDINFDSHIIMLFKEVRNLQWLGFRVPLKISFISQGAKQVYPFAVSLKETLRTYAQTSGKVTPEFSTLVASYKRDVQANITEGFRLKWETIPKVDPYVRKLSTSINNFRDKVDDLIVKYSEIKKQLDGLKSCPFKSESFNEIIANIQKVVDELNLANYSNLPQWVTQLDAQVESMLIERLIDAINSWVQLIEGKEDQKDSQSTSGSSNKGGKLNRMNYSIRNKSDEENSSDLTQPQQSQQQQQTISIKPKLEKTIHEIVIRNQILSLSPPLEVARVNWIDQLHSWLNICCDLPRIQSSRYDESAMVHRGGVDSKKQSTFRDMLPKLPQGSLESAYSAITNKLEQVQQYVSIWLQYQSLWDMDSSFVYSKLGDDLNKWQLLLNQIKKSRSTFDNSSTEKQFGPLTIDYTQVQASVNNKYDYWHKDILGHFGSKLAEKMNQFYETISSSRQELEKLSVETVSTEEAVHFIIQIQDMKKKLSSWEADLRYYRTGQDLLQRQRFSFPNDWLDCERVEGEWSAFNEILNRKNATISEAIPQLQAKILQESKSINDRIKDFIDEWTANKPLQGSIKHSTALETLKIFEGRLIRLREESDRLSKAKQALDLTDTTGSSSSDQDRLVPVEEEIQDLKAVWVELSNTWQEIDSLKETAWSAIIPRKVRKSLEDTLQKLKNLPNRIRQYSAFDHAQNLIKIYLKGNAIITDLHSEAIKDRHWKILKKRLNTNWIITELTLGSIWDSDLARNENIYREVITAAQGEIALEEFLKGVREFWTTLELDLVNYQRKCKLVRGWDDLFNKLAEHLNSISAMKMSPYYKVFEEEANHWDDRLNKVRSLLDVWIDVQRRWVYLEGIFSGSGDINQLLPAESTRFKSINSEFIAILKKVSGAPLILEVLAIERIQQTMERLSDLLGKVQKALGEYLERQRSAFARFYFVGDEDLLEIIGNSKDIIKIQKHFRKMFAGLANLTLDDEKTTIIGMSSAEGETVTFKKPISIANGPKIHEWLTMVESEMKSTLATLLSESLQHFNQVDVNDHSKYSEWVDNYPTQLVLLTSQIVWSTQVDQALGGGTLQQSKIQEQLQSIEQTTQMILNNLADSVLQDLSAQKRKKFEHLITELVHQRDVVRQLQKCKNLTGNKDFDWLYHMRYYYDATQENVLHKLVIHMANATFYYGFEYLGIGERLVQTPLTDRCYLTLTQALESRMGGNPFGPAGTGKTETVKALGSQLGRFVLVFCCDEGFDLQAMSRIFVGLCQCGAWGCFDEFNRLEERILSAVSQQIQTIQVALKENSKEVELLGGKNISLHQDMGIFVTMNPGYAGRSNLPDNLKKLFRSMAMIKPDREMIAQVMLYSQGFKTAEVLAGKIVPLFKLCQEQLSAQSHYDFGLRALKSVLVSAGGIKRKCQPPQLPPITDAESKTKADQIYCQYEIGVLLNSINDTMIPKLVADDIPLIQSLLLDVFPGSQLQPIQMDQLRKKIQEIAKQRHLVTKQEWVEKILQLHQILNINHGVMMVGPSGGGKTTSWEVYLEAIEQVDNIKSEAHVMDPKAITKDQLFGSLDLTTREWTDGLFTATLRRIIDNVRGESTKRHWIIFDGDVDPEWVENLNSLLDDNKLLTLPNGERLALPNNVRVMFEVQDLKYATLATISRCGMVWFSEEILTTQMIFQNYLDTLSNEPFDPQEKEQQKRNENAQLQQQQQTTITSPILTSPPTTSSSSRSTTSTTSMIPAGLKVQKECAAIISQYFEPGGLVHKVLEDAGQRPHIMDFTRLRVLNSFFSLMNRSIVNVIEYNQLHSDFPMSPENQSNYITNRLLYSLMWGLGGSMGLVERENFSKFIQTIAITPVPANTIPLLDYSVSIDDANWSLWKNKVPSVEVETHKVASPDVVIPTVDTTRHVDVLHAWLSEHRPLILCGPPGSGKTMTLTSTLRAFPDFEVVSLNFSSATTPELLLKTFDHHCEYKRTPSGETVLRPTQLGKWLVVFCDEINLPSTDKYGTQRVITFIRQMVEKGGFWRTSDHTWIKLDKIQFVGACNPPTDAGRVQLTHRFLRHAPILLVDFPSTSSLTQIYGTFNRALMKLLPNLRSFADNLTDAMVEFYSESQKRFTPDIQAHYIYSPRELSRWDRALLEAIQTMDGCTLEGLVRLWAHEALRLFQDRLVETEEKEWTDKKIDEVALKHFPSVNLDALKRPILYSNWLTKDYQPVNRSDLREYVKARLKVFYEEELDVPLVLFNEVLDHILRIDRVFRQPQGHALLIGVSGGGKSVLSRFVAWMNGLSIYTIKVNNNYKSSDFDDDLRMLLKRAGCKEEKICFIFDESNVLESSFLERMNTLLAGGEVPGLFEGEEFTALMHACKETAQRNGLILDSEEELYKYFTSQVRRNLHVVFTMNPASPDFHNRSATSPALFNRCVLDWFGEWSPEALFQVGSEFTRNLDLENPQYIAPPVFIQEAEIMGNNLMAIPPSHRDAVVSSLVYIHQTIGEANIRLLKRQGRQNYVTPRHYLDFINQVVLLINEKRDQLEEEQLHLNIGLKKLRDTEAQVKDLQVSLAQKNRELDVKNEQANQKLKQMVQDQQAAEIKQKDARELQVQLDVRNKEIAVQKVKAYADLEKAEPAIIEAQEAVSTIKKKHLDEIKSLPKPPTPVKLAMEAVCLMLGGKKLEWADIRKKIMEPNFITSIINYDTKKMMTPKIREAITKGYLEDPGFDYETVNRASKACGPLVKWATAQTYYSEILDRIKPLREEVEQLENAANELKLKQDEIVATITALEKSIATYKEEYATLIRETEQIKTESSKVKNKVDRSIALLDNLNSERGRWEQQSENFNTQMSTVVGDVVLASAFLAYIGFFDQNFRTDLMRKWMIRLDSVGIKFKSDLSVPSFLSKPEERLNWHANSLPSDELCIENAIMLKRFNRYPLVIDPSGQAMEFLMNQYADKKITKTSFLDSSFMKNLESALRFGCPLLVQDVENIDPVLNPVLNKEIRKKGGRILIRLGDQDVDFSPSFMIFLFTRDPTAHFTPDLCSRVTFVNFTVTPSSLQSQCLHEALKTERPDTHKKRSDLLKIQGEFQVKLRILEKSLLNALSQASGNILDDDSVISTLETLKKETTEIALKVEETETVMQEISEVSALYNPMALSCSRVYFAMEELSQFHLYQFSLRAFLDIFYNLLNNNPNLVDKKDPNERLVYLSKDIFSMTFNRVTRTLLNDDKLTFALQLTIISVKGTSNEIEESEWDFLLKGGDNLTSIKETIPQLDSLLSTTQQKWLICLRQQVPSFSKLVDHIQQNSSDWKQFFGKDQVGEPIIPESWIVAQAQLSNQQSTIVSNFRKILLMKAFHSDRVLQYSHSFVCSVFGEDFLNTQELDMANIVEKEVKSSSPLLLCSVPGYDASSKVDDLALQLHKQYKSFAIGSPEGFELAEKSIYAAAKSGTWVLLKNIHLAPQWLVQLEKKLHSLSPHPSFRLFMTSEIHPALPANLLRMSNVFSYENPPGVKANLLHTFIGIPATRMDKQPAERSRIYFLLAWFHAIIQERLRYIPLGWTKFFEFNDADLRGALDSIDYWVDLYSKGRSNIDPDKIPWIAVRTILGSTIYGGRIDNEFDMRLLYSFLEQLFTPSAFNPDFPLVPSIGLSVPEGTTRAHFMKWIEALPEISTPIWLGLPENAESLLLSNKARKMINDLQKMQSSEEDGEDDQVSGSSKKESSSSSSEDKGKAKLRATITEWTKLLPKPLKQLKRTTQNIKDPLFRCFEREISTGGKLVKKITNDLANLLELISGNIKSTNYLRSLTTSISKGIVPKEWKWYSVPETISLSVWISDFSKRMQQLSEISESSDYSSIQVWLGGLLNPEAYITATRQSASQLNGWSLENLRLHASSLGKISSEGGASFNVKGMALEGAVWNNDQLTPTDILSTPISIATLTWKDKDDPIFNNSSSKLSVPVYLNETRSELLFSIDLPYDQSTSKQNWYQRSVSISSWKSDI</sequence>
<proteinExistence type="evidence at protein level"/>